<name>PDXH_GLUOX</name>
<feature type="chain" id="PRO_0000167709" description="Pyridoxine/pyridoxamine 5'-phosphate oxidase">
    <location>
        <begin position="1"/>
        <end position="200"/>
    </location>
</feature>
<feature type="binding site" evidence="1">
    <location>
        <begin position="49"/>
        <end position="54"/>
    </location>
    <ligand>
        <name>FMN</name>
        <dbReference type="ChEBI" id="CHEBI:58210"/>
    </ligand>
</feature>
<feature type="binding site" evidence="1">
    <location>
        <position position="54"/>
    </location>
    <ligand>
        <name>substrate</name>
    </ligand>
</feature>
<feature type="binding site" evidence="1">
    <location>
        <begin position="64"/>
        <end position="65"/>
    </location>
    <ligand>
        <name>FMN</name>
        <dbReference type="ChEBI" id="CHEBI:58210"/>
    </ligand>
</feature>
<feature type="binding site" evidence="1">
    <location>
        <position position="70"/>
    </location>
    <ligand>
        <name>FMN</name>
        <dbReference type="ChEBI" id="CHEBI:58210"/>
    </ligand>
</feature>
<feature type="binding site" evidence="1">
    <location>
        <position position="71"/>
    </location>
    <ligand>
        <name>FMN</name>
        <dbReference type="ChEBI" id="CHEBI:58210"/>
    </ligand>
</feature>
<feature type="binding site" evidence="1">
    <location>
        <position position="93"/>
    </location>
    <ligand>
        <name>FMN</name>
        <dbReference type="ChEBI" id="CHEBI:58210"/>
    </ligand>
</feature>
<feature type="binding site" evidence="1">
    <location>
        <position position="111"/>
    </location>
    <ligand>
        <name>substrate</name>
    </ligand>
</feature>
<feature type="binding site" evidence="1">
    <location>
        <position position="115"/>
    </location>
    <ligand>
        <name>substrate</name>
    </ligand>
</feature>
<feature type="binding site" evidence="1">
    <location>
        <position position="119"/>
    </location>
    <ligand>
        <name>substrate</name>
    </ligand>
</feature>
<feature type="binding site" evidence="1">
    <location>
        <begin position="128"/>
        <end position="129"/>
    </location>
    <ligand>
        <name>FMN</name>
        <dbReference type="ChEBI" id="CHEBI:58210"/>
    </ligand>
</feature>
<feature type="binding site" evidence="1">
    <location>
        <position position="173"/>
    </location>
    <ligand>
        <name>FMN</name>
        <dbReference type="ChEBI" id="CHEBI:58210"/>
    </ligand>
</feature>
<feature type="binding site" evidence="1">
    <location>
        <begin position="179"/>
        <end position="181"/>
    </location>
    <ligand>
        <name>substrate</name>
    </ligand>
</feature>
<feature type="binding site" evidence="1">
    <location>
        <position position="183"/>
    </location>
    <ligand>
        <name>FMN</name>
        <dbReference type="ChEBI" id="CHEBI:58210"/>
    </ligand>
</feature>
<accession>Q5FPH2</accession>
<dbReference type="EC" id="1.4.3.5" evidence="1"/>
<dbReference type="EMBL" id="CP000009">
    <property type="protein sequence ID" value="AAW61724.1"/>
    <property type="molecule type" value="Genomic_DNA"/>
</dbReference>
<dbReference type="RefSeq" id="WP_011253501.1">
    <property type="nucleotide sequence ID" value="NC_006677.1"/>
</dbReference>
<dbReference type="SMR" id="Q5FPH2"/>
<dbReference type="STRING" id="290633.GOX1988"/>
<dbReference type="KEGG" id="gox:GOX1988"/>
<dbReference type="eggNOG" id="COG0259">
    <property type="taxonomic scope" value="Bacteria"/>
</dbReference>
<dbReference type="HOGENOM" id="CLU_032263_2_2_5"/>
<dbReference type="UniPathway" id="UPA01068">
    <property type="reaction ID" value="UER00304"/>
</dbReference>
<dbReference type="UniPathway" id="UPA01068">
    <property type="reaction ID" value="UER00305"/>
</dbReference>
<dbReference type="Proteomes" id="UP000006375">
    <property type="component" value="Chromosome"/>
</dbReference>
<dbReference type="GO" id="GO:0010181">
    <property type="term" value="F:FMN binding"/>
    <property type="evidence" value="ECO:0007669"/>
    <property type="project" value="UniProtKB-UniRule"/>
</dbReference>
<dbReference type="GO" id="GO:0004733">
    <property type="term" value="F:pyridoxamine phosphate oxidase activity"/>
    <property type="evidence" value="ECO:0007669"/>
    <property type="project" value="UniProtKB-UniRule"/>
</dbReference>
<dbReference type="GO" id="GO:0008615">
    <property type="term" value="P:pyridoxine biosynthetic process"/>
    <property type="evidence" value="ECO:0007669"/>
    <property type="project" value="UniProtKB-KW"/>
</dbReference>
<dbReference type="FunFam" id="2.30.110.10:FF:000020">
    <property type="entry name" value="PNPO isoform 11"/>
    <property type="match status" value="1"/>
</dbReference>
<dbReference type="Gene3D" id="2.30.110.10">
    <property type="entry name" value="Electron Transport, Fmn-binding Protein, Chain A"/>
    <property type="match status" value="1"/>
</dbReference>
<dbReference type="HAMAP" id="MF_01629">
    <property type="entry name" value="PdxH"/>
    <property type="match status" value="1"/>
</dbReference>
<dbReference type="InterPro" id="IPR000659">
    <property type="entry name" value="Pyridox_Oxase"/>
</dbReference>
<dbReference type="InterPro" id="IPR019740">
    <property type="entry name" value="Pyridox_Oxase_CS"/>
</dbReference>
<dbReference type="InterPro" id="IPR011576">
    <property type="entry name" value="Pyridox_Oxase_N"/>
</dbReference>
<dbReference type="InterPro" id="IPR019576">
    <property type="entry name" value="Pyridoxamine_oxidase_dimer_C"/>
</dbReference>
<dbReference type="InterPro" id="IPR012349">
    <property type="entry name" value="Split_barrel_FMN-bd"/>
</dbReference>
<dbReference type="NCBIfam" id="TIGR00558">
    <property type="entry name" value="pdxH"/>
    <property type="match status" value="1"/>
</dbReference>
<dbReference type="NCBIfam" id="NF004231">
    <property type="entry name" value="PRK05679.1"/>
    <property type="match status" value="1"/>
</dbReference>
<dbReference type="PANTHER" id="PTHR10851:SF0">
    <property type="entry name" value="PYRIDOXINE-5'-PHOSPHATE OXIDASE"/>
    <property type="match status" value="1"/>
</dbReference>
<dbReference type="PANTHER" id="PTHR10851">
    <property type="entry name" value="PYRIDOXINE-5-PHOSPHATE OXIDASE"/>
    <property type="match status" value="1"/>
</dbReference>
<dbReference type="Pfam" id="PF10590">
    <property type="entry name" value="PNP_phzG_C"/>
    <property type="match status" value="1"/>
</dbReference>
<dbReference type="Pfam" id="PF01243">
    <property type="entry name" value="PNPOx_N"/>
    <property type="match status" value="1"/>
</dbReference>
<dbReference type="PIRSF" id="PIRSF000190">
    <property type="entry name" value="Pyd_amn-ph_oxd"/>
    <property type="match status" value="1"/>
</dbReference>
<dbReference type="SUPFAM" id="SSF50475">
    <property type="entry name" value="FMN-binding split barrel"/>
    <property type="match status" value="1"/>
</dbReference>
<dbReference type="PROSITE" id="PS01064">
    <property type="entry name" value="PYRIDOX_OXIDASE"/>
    <property type="match status" value="1"/>
</dbReference>
<reference key="1">
    <citation type="journal article" date="2005" name="Nat. Biotechnol.">
        <title>Complete genome sequence of the acetic acid bacterium Gluconobacter oxydans.</title>
        <authorList>
            <person name="Prust C."/>
            <person name="Hoffmeister M."/>
            <person name="Liesegang H."/>
            <person name="Wiezer A."/>
            <person name="Fricke W.F."/>
            <person name="Ehrenreich A."/>
            <person name="Gottschalk G."/>
            <person name="Deppenmeier U."/>
        </authorList>
    </citation>
    <scope>NUCLEOTIDE SEQUENCE [LARGE SCALE GENOMIC DNA]</scope>
    <source>
        <strain>621H</strain>
    </source>
</reference>
<proteinExistence type="inferred from homology"/>
<organism>
    <name type="scientific">Gluconobacter oxydans (strain 621H)</name>
    <name type="common">Gluconobacter suboxydans</name>
    <dbReference type="NCBI Taxonomy" id="290633"/>
    <lineage>
        <taxon>Bacteria</taxon>
        <taxon>Pseudomonadati</taxon>
        <taxon>Pseudomonadota</taxon>
        <taxon>Alphaproteobacteria</taxon>
        <taxon>Acetobacterales</taxon>
        <taxon>Acetobacteraceae</taxon>
        <taxon>Gluconobacter</taxon>
    </lineage>
</organism>
<evidence type="ECO:0000255" key="1">
    <source>
        <dbReference type="HAMAP-Rule" id="MF_01629"/>
    </source>
</evidence>
<protein>
    <recommendedName>
        <fullName evidence="1">Pyridoxine/pyridoxamine 5'-phosphate oxidase</fullName>
        <ecNumber evidence="1">1.4.3.5</ecNumber>
    </recommendedName>
    <alternativeName>
        <fullName evidence="1">PNP/PMP oxidase</fullName>
        <shortName evidence="1">PNPOx</shortName>
    </alternativeName>
    <alternativeName>
        <fullName evidence="1">Pyridoxal 5'-phosphate synthase</fullName>
    </alternativeName>
</protein>
<gene>
    <name evidence="1" type="primary">pdxH</name>
    <name type="ordered locus">GOX1988</name>
</gene>
<keyword id="KW-0285">Flavoprotein</keyword>
<keyword id="KW-0288">FMN</keyword>
<keyword id="KW-0560">Oxidoreductase</keyword>
<keyword id="KW-0664">Pyridoxine biosynthesis</keyword>
<keyword id="KW-1185">Reference proteome</keyword>
<comment type="function">
    <text evidence="1">Catalyzes the oxidation of either pyridoxine 5'-phosphate (PNP) or pyridoxamine 5'-phosphate (PMP) into pyridoxal 5'-phosphate (PLP).</text>
</comment>
<comment type="catalytic activity">
    <reaction evidence="1">
        <text>pyridoxamine 5'-phosphate + O2 + H2O = pyridoxal 5'-phosphate + H2O2 + NH4(+)</text>
        <dbReference type="Rhea" id="RHEA:15817"/>
        <dbReference type="ChEBI" id="CHEBI:15377"/>
        <dbReference type="ChEBI" id="CHEBI:15379"/>
        <dbReference type="ChEBI" id="CHEBI:16240"/>
        <dbReference type="ChEBI" id="CHEBI:28938"/>
        <dbReference type="ChEBI" id="CHEBI:58451"/>
        <dbReference type="ChEBI" id="CHEBI:597326"/>
        <dbReference type="EC" id="1.4.3.5"/>
    </reaction>
</comment>
<comment type="catalytic activity">
    <reaction evidence="1">
        <text>pyridoxine 5'-phosphate + O2 = pyridoxal 5'-phosphate + H2O2</text>
        <dbReference type="Rhea" id="RHEA:15149"/>
        <dbReference type="ChEBI" id="CHEBI:15379"/>
        <dbReference type="ChEBI" id="CHEBI:16240"/>
        <dbReference type="ChEBI" id="CHEBI:58589"/>
        <dbReference type="ChEBI" id="CHEBI:597326"/>
        <dbReference type="EC" id="1.4.3.5"/>
    </reaction>
</comment>
<comment type="cofactor">
    <cofactor evidence="1">
        <name>FMN</name>
        <dbReference type="ChEBI" id="CHEBI:58210"/>
    </cofactor>
    <text evidence="1">Binds 1 FMN per subunit.</text>
</comment>
<comment type="pathway">
    <text evidence="1">Cofactor metabolism; pyridoxal 5'-phosphate salvage; pyridoxal 5'-phosphate from pyridoxamine 5'-phosphate: step 1/1.</text>
</comment>
<comment type="pathway">
    <text evidence="1">Cofactor metabolism; pyridoxal 5'-phosphate salvage; pyridoxal 5'-phosphate from pyridoxine 5'-phosphate: step 1/1.</text>
</comment>
<comment type="subunit">
    <text evidence="1">Homodimer.</text>
</comment>
<comment type="similarity">
    <text evidence="1">Belongs to the pyridoxamine 5'-phosphate oxidase family.</text>
</comment>
<sequence length="200" mass="22656">MSDIPLIDLKADPFALFAAWVSDAEKSEPNDPNAMAVATATPDGRPSVRMLLLKGVDERGFVFYTNLESRKGRELLANPHVALLFHWKSLRRQIRIEGPVEAVSAAEADAYFASRSRMSRLGAIASDQSRPLDDRSTFEERLKAVDEKYGDGPIPRPANWSGFRVLPEAIEFWQDRPYRLHDRAVWTRDGNGWNVTRLYP</sequence>